<evidence type="ECO:0000250" key="1">
    <source>
        <dbReference type="UniProtKB" id="P43883"/>
    </source>
</evidence>
<evidence type="ECO:0000256" key="2">
    <source>
        <dbReference type="SAM" id="MobiDB-lite"/>
    </source>
</evidence>
<evidence type="ECO:0000269" key="3">
    <source>
    </source>
</evidence>
<evidence type="ECO:0000269" key="4">
    <source>
    </source>
</evidence>
<evidence type="ECO:0000269" key="5">
    <source>
    </source>
</evidence>
<evidence type="ECO:0000303" key="6">
    <source>
    </source>
</evidence>
<evidence type="ECO:0000305" key="7"/>
<evidence type="ECO:0000305" key="8">
    <source>
    </source>
</evidence>
<evidence type="ECO:0000312" key="9">
    <source>
        <dbReference type="HGNC" id="HGNC:248"/>
    </source>
</evidence>
<evidence type="ECO:0007744" key="10">
    <source>
    </source>
</evidence>
<evidence type="ECO:0007744" key="11">
    <source>
    </source>
</evidence>
<evidence type="ECO:0007744" key="12">
    <source>
    </source>
</evidence>
<protein>
    <recommendedName>
        <fullName evidence="9">Perilipin-2</fullName>
    </recommendedName>
    <alternativeName>
        <fullName>Adipophilin</fullName>
    </alternativeName>
    <alternativeName>
        <fullName evidence="6">Adipose differentiation-related protein</fullName>
        <shortName evidence="6">ADRP</shortName>
    </alternativeName>
</protein>
<gene>
    <name evidence="9" type="primary">PLIN2</name>
    <name type="synonym">ADFP</name>
</gene>
<sequence length="437" mass="48075">MASVAVDPQPSVVTRVVNLPLVSSTYDLMSSAYLSTKDQYPYLKSVCEMAENGVKTITSVAMTSALPIIQKLEPQIAVANTYACKGLDRIEERLPILNQPSTQIVANAKGAVTGAKDAVTTTVTGAKDSVASTITGVMDKTKGAVTGSVEKTKSVVSGSINTVLGSRMMQLVSSGVENALTKSELLVEQYLPLTEEELEKEAKKVEGFDLVQKPSYYVRLGSLSTKLHSRAYQQALSRVKEAKQKSQQTISQLHSTVHLIEFARKNVYSANQKIQDAQDKLYLSWVEWKRSIGYDDTDESHCAEHIESRTLAIARNLTQQLQTTCHTLLSNIQGVPQNIQDQAKHMGVMAGDIYSVFRNAASFKEVSDSLLTSSKGQLQKMKESLDDVMDYLVNNTPLNWLVGPFYPQLTESQNAQDQGAEMDKSSQETQRSEHKTH</sequence>
<name>PLIN2_HUMAN</name>
<proteinExistence type="evidence at protein level"/>
<organism>
    <name type="scientific">Homo sapiens</name>
    <name type="common">Human</name>
    <dbReference type="NCBI Taxonomy" id="9606"/>
    <lineage>
        <taxon>Eukaryota</taxon>
        <taxon>Metazoa</taxon>
        <taxon>Chordata</taxon>
        <taxon>Craniata</taxon>
        <taxon>Vertebrata</taxon>
        <taxon>Euteleostomi</taxon>
        <taxon>Mammalia</taxon>
        <taxon>Eutheria</taxon>
        <taxon>Euarchontoglires</taxon>
        <taxon>Primates</taxon>
        <taxon>Haplorrhini</taxon>
        <taxon>Catarrhini</taxon>
        <taxon>Hominidae</taxon>
        <taxon>Homo</taxon>
    </lineage>
</organism>
<accession>Q99541</accession>
<accession>Q9BSC3</accession>
<reference key="1">
    <citation type="journal article" date="1996" name="Biochem. J.">
        <title>Adipocyte differentiation-related protein is secreted into milk as a constituent of milk lipid globule membrane.</title>
        <authorList>
            <person name="Heid H.W."/>
            <person name="Schnolzer M."/>
            <person name="Keenan T.W."/>
        </authorList>
    </citation>
    <scope>NUCLEOTIDE SEQUENCE [MRNA]</scope>
    <scope>TISSUE SPECIFICITY</scope>
    <scope>ACYLATION</scope>
</reference>
<reference key="2">
    <citation type="submission" date="2001-11" db="EMBL/GenBank/DDBJ databases">
        <authorList>
            <person name="Tangkeangsirisin W."/>
            <person name="Serrero G."/>
        </authorList>
    </citation>
    <scope>NUCLEOTIDE SEQUENCE [MRNA]</scope>
</reference>
<reference key="3">
    <citation type="journal article" date="2004" name="Genome Res.">
        <title>The status, quality, and expansion of the NIH full-length cDNA project: the Mammalian Gene Collection (MGC).</title>
        <authorList>
            <consortium name="The MGC Project Team"/>
        </authorList>
    </citation>
    <scope>NUCLEOTIDE SEQUENCE [LARGE SCALE MRNA]</scope>
    <source>
        <tissue>Placenta</tissue>
    </source>
</reference>
<reference key="4">
    <citation type="journal article" date="2011" name="BMC Syst. Biol.">
        <title>Initial characterization of the human central proteome.</title>
        <authorList>
            <person name="Burkard T.R."/>
            <person name="Planyavsky M."/>
            <person name="Kaupe I."/>
            <person name="Breitwieser F.P."/>
            <person name="Buerckstuemmer T."/>
            <person name="Bennett K.L."/>
            <person name="Superti-Furga G."/>
            <person name="Colinge J."/>
        </authorList>
    </citation>
    <scope>IDENTIFICATION BY MASS SPECTROMETRY [LARGE SCALE ANALYSIS]</scope>
</reference>
<reference key="5">
    <citation type="journal article" date="2012" name="Mol. Cell. Proteomics">
        <title>Comparative large-scale characterisation of plant vs. mammal proteins reveals similar and idiosyncratic N-alpha acetylation features.</title>
        <authorList>
            <person name="Bienvenut W.V."/>
            <person name="Sumpton D."/>
            <person name="Martinez A."/>
            <person name="Lilla S."/>
            <person name="Espagne C."/>
            <person name="Meinnel T."/>
            <person name="Giglione C."/>
        </authorList>
    </citation>
    <scope>ACETYLATION [LARGE SCALE ANALYSIS] AT ALA-2</scope>
    <scope>CLEAVAGE OF INITIATOR METHIONINE [LARGE SCALE ANALYSIS]</scope>
    <scope>IDENTIFICATION BY MASS SPECTROMETRY [LARGE SCALE ANALYSIS]</scope>
</reference>
<reference key="6">
    <citation type="journal article" date="2012" name="Proc. Natl. Acad. Sci. U.S.A.">
        <title>N-terminal acetylome analyses and functional insights of the N-terminal acetyltransferase NatB.</title>
        <authorList>
            <person name="Van Damme P."/>
            <person name="Lasa M."/>
            <person name="Polevoda B."/>
            <person name="Gazquez C."/>
            <person name="Elosegui-Artola A."/>
            <person name="Kim D.S."/>
            <person name="De Juan-Pardo E."/>
            <person name="Demeyer K."/>
            <person name="Hole K."/>
            <person name="Larrea E."/>
            <person name="Timmerman E."/>
            <person name="Prieto J."/>
            <person name="Arnesen T."/>
            <person name="Sherman F."/>
            <person name="Gevaert K."/>
            <person name="Aldabe R."/>
        </authorList>
    </citation>
    <scope>ACETYLATION [LARGE SCALE ANALYSIS] AT ALA-2</scope>
    <scope>CLEAVAGE OF INITIATOR METHIONINE [LARGE SCALE ANALYSIS]</scope>
    <scope>IDENTIFICATION BY MASS SPECTROMETRY [LARGE SCALE ANALYSIS]</scope>
</reference>
<reference key="7">
    <citation type="journal article" date="2013" name="J. Proteome Res.">
        <title>Toward a comprehensive characterization of a human cancer cell phosphoproteome.</title>
        <authorList>
            <person name="Zhou H."/>
            <person name="Di Palma S."/>
            <person name="Preisinger C."/>
            <person name="Peng M."/>
            <person name="Polat A.N."/>
            <person name="Heck A.J."/>
            <person name="Mohammed S."/>
        </authorList>
    </citation>
    <scope>PHOSPHORYLATION [LARGE SCALE ANALYSIS] AT SER-215</scope>
    <scope>IDENTIFICATION BY MASS SPECTROMETRY [LARGE SCALE ANALYSIS]</scope>
    <source>
        <tissue>Erythroleukemia</tissue>
    </source>
</reference>
<reference key="8">
    <citation type="journal article" date="2014" name="J. Proteomics">
        <title>An enzyme assisted RP-RPLC approach for in-depth analysis of human liver phosphoproteome.</title>
        <authorList>
            <person name="Bian Y."/>
            <person name="Song C."/>
            <person name="Cheng K."/>
            <person name="Dong M."/>
            <person name="Wang F."/>
            <person name="Huang J."/>
            <person name="Sun D."/>
            <person name="Wang L."/>
            <person name="Ye M."/>
            <person name="Zou H."/>
        </authorList>
    </citation>
    <scope>IDENTIFICATION BY MASS SPECTROMETRY [LARGE SCALE ANALYSIS]</scope>
    <source>
        <tissue>Liver</tissue>
    </source>
</reference>
<reference key="9">
    <citation type="journal article" date="2015" name="PeerJ">
        <title>Perilipin-related protein regulates lipid metabolism in C. elegans.</title>
        <authorList>
            <person name="Chughtai A.A."/>
            <person name="Kassak F."/>
            <person name="Kostrouchova M."/>
            <person name="Novotny J.P."/>
            <person name="Krause M.W."/>
            <person name="Saudek V."/>
            <person name="Kostrouch Z."/>
            <person name="Kostrouchova M."/>
        </authorList>
    </citation>
    <scope>SUBCELLULAR LOCATION</scope>
</reference>
<reference key="10">
    <citation type="journal article" date="2019" name="J. Biol. Chem.">
        <title>N-terminal acetylation and the N-end rule pathway control degradation of the lipid droplet protein PLIN2.</title>
        <authorList>
            <person name="Nguyen K.T."/>
            <person name="Lee C.S."/>
            <person name="Mun S.H."/>
            <person name="Truong N.T."/>
            <person name="Park S.K."/>
            <person name="Hwang C.S."/>
        </authorList>
    </citation>
    <scope>ACETYLATION</scope>
    <scope>UBIQUITINATION BY MARCHF6</scope>
</reference>
<reference key="11">
    <citation type="journal article" date="2021" name="Mol. Cell">
        <title>Choline kinase alpha 2 acts as a protein kinase to promote lipolysis of lipid droplets.</title>
        <authorList>
            <person name="Liu R."/>
            <person name="Lee J.H."/>
            <person name="Li J."/>
            <person name="Yu R."/>
            <person name="Tan L."/>
            <person name="Xia Y."/>
            <person name="Zheng Y."/>
            <person name="Bian X.L."/>
            <person name="Lorenzi P.L."/>
            <person name="Chen Q."/>
            <person name="Lu Z."/>
        </authorList>
    </citation>
    <scope>FUNCTION</scope>
    <scope>SUBCELLULAR LOCATION</scope>
    <scope>PHOSPHORYLATION AT TYR-232</scope>
    <scope>MUTAGENESIS OF TYR-232</scope>
</reference>
<comment type="function">
    <text evidence="4">Structural component of lipid droplets, which is required for the formation and maintenance of lipid storage droplets.</text>
</comment>
<comment type="subunit">
    <text evidence="1">Interacts with IRGC.</text>
</comment>
<comment type="interaction">
    <interactant intactId="EBI-2115275">
        <id>Q99541</id>
    </interactant>
    <interactant intactId="EBI-2813554">
        <id>Q8WTS1</id>
        <label>ABHD5</label>
    </interactant>
    <organismsDiffer>false</organismsDiffer>
    <experiments>3</experiments>
</comment>
<comment type="interaction">
    <interactant intactId="EBI-2115275">
        <id>Q99541</id>
    </interactant>
    <interactant intactId="EBI-12878374">
        <id>Q9BSY9</id>
        <label>DESI2</label>
    </interactant>
    <organismsDiffer>false</organismsDiffer>
    <experiments>3</experiments>
</comment>
<comment type="interaction">
    <interactant intactId="EBI-2115275">
        <id>Q99541</id>
    </interactant>
    <interactant intactId="EBI-12937691">
        <id>Q9BUP3-3</id>
        <label>HTATIP2</label>
    </interactant>
    <organismsDiffer>false</organismsDiffer>
    <experiments>3</experiments>
</comment>
<comment type="interaction">
    <interactant intactId="EBI-2115275">
        <id>Q99541</id>
    </interactant>
    <interactant intactId="EBI-10975473">
        <id>O60333-2</id>
        <label>KIF1B</label>
    </interactant>
    <organismsDiffer>false</organismsDiffer>
    <experiments>3</experiments>
</comment>
<comment type="interaction">
    <interactant intactId="EBI-2115275">
        <id>Q99541</id>
    </interactant>
    <interactant intactId="EBI-1389308">
        <id>Q7Z3K3</id>
        <label>POGZ</label>
    </interactant>
    <organismsDiffer>false</organismsDiffer>
    <experiments>3</experiments>
</comment>
<comment type="interaction">
    <interactant intactId="EBI-2115275">
        <id>Q99541</id>
    </interactant>
    <interactant intactId="EBI-4402330">
        <id>O95562</id>
        <label>SFT2D2</label>
    </interactant>
    <organismsDiffer>false</organismsDiffer>
    <experiments>3</experiments>
</comment>
<comment type="interaction">
    <interactant intactId="EBI-2115275">
        <id>Q99541</id>
    </interactant>
    <interactant intactId="EBI-720609">
        <id>O76024</id>
        <label>WFS1</label>
    </interactant>
    <organismsDiffer>false</organismsDiffer>
    <experiments>3</experiments>
</comment>
<comment type="subcellular location">
    <subcellularLocation>
        <location evidence="1">Membrane</location>
        <topology evidence="1">Peripheral membrane protein</topology>
    </subcellularLocation>
    <subcellularLocation>
        <location evidence="4 8">Lipid droplet</location>
    </subcellularLocation>
</comment>
<comment type="tissue specificity">
    <text evidence="5">Milk lipid globules.</text>
</comment>
<comment type="PTM">
    <text evidence="3 5">Acylated; primarily with C14, C16 and C18 fatty acids.</text>
</comment>
<comment type="PTM">
    <text evidence="4">Phosphorylation at Tyr-232 by isoform 1 of CHKA (CHKalpha2) promotes dissociation from lipid droplets: dissociation is followed by recruitment of autophagosome machinery to lipid droplets and subsequent lipid droplet lipolysis.</text>
</comment>
<comment type="PTM">
    <text evidence="3">Polyubiquitination of Nt-acetylatable A-PLIN2 by MARCHF6 lead to degradation by 26S proteasomes.</text>
</comment>
<comment type="similarity">
    <text evidence="7">Belongs to the perilipin family.</text>
</comment>
<dbReference type="EMBL" id="X97324">
    <property type="protein sequence ID" value="CAA65989.1"/>
    <property type="molecule type" value="mRNA"/>
</dbReference>
<dbReference type="EMBL" id="AF443203">
    <property type="protein sequence ID" value="AAL35614.1"/>
    <property type="molecule type" value="mRNA"/>
</dbReference>
<dbReference type="EMBL" id="BC005127">
    <property type="protein sequence ID" value="AAH05127.1"/>
    <property type="molecule type" value="mRNA"/>
</dbReference>
<dbReference type="CCDS" id="CCDS6490.1"/>
<dbReference type="RefSeq" id="NP_001113.2">
    <property type="nucleotide sequence ID" value="NM_001122.3"/>
</dbReference>
<dbReference type="SMR" id="Q99541"/>
<dbReference type="BioGRID" id="106635">
    <property type="interactions" value="30"/>
</dbReference>
<dbReference type="FunCoup" id="Q99541">
    <property type="interactions" value="327"/>
</dbReference>
<dbReference type="IntAct" id="Q99541">
    <property type="interactions" value="20"/>
</dbReference>
<dbReference type="MINT" id="Q99541"/>
<dbReference type="STRING" id="9606.ENSP00000276914"/>
<dbReference type="GlyGen" id="Q99541">
    <property type="glycosylation" value="1 site, 1 O-linked glycan (1 site)"/>
</dbReference>
<dbReference type="iPTMnet" id="Q99541"/>
<dbReference type="PhosphoSitePlus" id="Q99541"/>
<dbReference type="BioMuta" id="PLIN2"/>
<dbReference type="DMDM" id="21264409"/>
<dbReference type="jPOST" id="Q99541"/>
<dbReference type="MassIVE" id="Q99541"/>
<dbReference type="PaxDb" id="9606-ENSP00000276914"/>
<dbReference type="PeptideAtlas" id="Q99541"/>
<dbReference type="ProteomicsDB" id="78314"/>
<dbReference type="Pumba" id="Q99541"/>
<dbReference type="Antibodypedia" id="24726">
    <property type="antibodies" value="963 antibodies from 38 providers"/>
</dbReference>
<dbReference type="DNASU" id="123"/>
<dbReference type="Ensembl" id="ENST00000276914.7">
    <property type="protein sequence ID" value="ENSP00000276914.2"/>
    <property type="gene ID" value="ENSG00000147872.10"/>
</dbReference>
<dbReference type="GeneID" id="123"/>
<dbReference type="KEGG" id="hsa:123"/>
<dbReference type="MANE-Select" id="ENST00000276914.7">
    <property type="protein sequence ID" value="ENSP00000276914.2"/>
    <property type="RefSeq nucleotide sequence ID" value="NM_001122.4"/>
    <property type="RefSeq protein sequence ID" value="NP_001113.2"/>
</dbReference>
<dbReference type="UCSC" id="uc003zno.4">
    <property type="organism name" value="human"/>
</dbReference>
<dbReference type="AGR" id="HGNC:248"/>
<dbReference type="CTD" id="123"/>
<dbReference type="DisGeNET" id="123"/>
<dbReference type="GeneCards" id="PLIN2"/>
<dbReference type="HGNC" id="HGNC:248">
    <property type="gene designation" value="PLIN2"/>
</dbReference>
<dbReference type="HPA" id="ENSG00000147872">
    <property type="expression patterns" value="Tissue enhanced (adipose tissue, liver)"/>
</dbReference>
<dbReference type="MIM" id="103195">
    <property type="type" value="gene"/>
</dbReference>
<dbReference type="neXtProt" id="NX_Q99541"/>
<dbReference type="OpenTargets" id="ENSG00000147872"/>
<dbReference type="PharmGKB" id="PA24569"/>
<dbReference type="VEuPathDB" id="HostDB:ENSG00000147872"/>
<dbReference type="eggNOG" id="ENOG502QRYF">
    <property type="taxonomic scope" value="Eukaryota"/>
</dbReference>
<dbReference type="GeneTree" id="ENSGT00950000182920"/>
<dbReference type="HOGENOM" id="CLU_035133_0_1_1"/>
<dbReference type="InParanoid" id="Q99541"/>
<dbReference type="OMA" id="NQENCHE"/>
<dbReference type="OrthoDB" id="376826at2759"/>
<dbReference type="PAN-GO" id="Q99541">
    <property type="GO annotations" value="4 GO annotations based on evolutionary models"/>
</dbReference>
<dbReference type="PhylomeDB" id="Q99541"/>
<dbReference type="TreeFam" id="TF328397"/>
<dbReference type="PathwayCommons" id="Q99541"/>
<dbReference type="Reactome" id="R-HSA-1989781">
    <property type="pathway name" value="PPARA activates gene expression"/>
</dbReference>
<dbReference type="Reactome" id="R-HSA-9613354">
    <property type="pathway name" value="Lipophagy"/>
</dbReference>
<dbReference type="Reactome" id="R-HSA-9613829">
    <property type="pathway name" value="Chaperone Mediated Autophagy"/>
</dbReference>
<dbReference type="Reactome" id="R-HSA-9615710">
    <property type="pathway name" value="Late endosomal microautophagy"/>
</dbReference>
<dbReference type="Reactome" id="R-HSA-9841922">
    <property type="pathway name" value="MLL4 and MLL3 complexes regulate expression of PPARG target genes in adipogenesis and hepatic steatosis"/>
</dbReference>
<dbReference type="SignaLink" id="Q99541"/>
<dbReference type="SIGNOR" id="Q99541"/>
<dbReference type="BioGRID-ORCS" id="123">
    <property type="hits" value="16 hits in 1163 CRISPR screens"/>
</dbReference>
<dbReference type="ChiTaRS" id="PLIN2">
    <property type="organism name" value="human"/>
</dbReference>
<dbReference type="GeneWiki" id="Adipose_differentiation-related_protein"/>
<dbReference type="GenomeRNAi" id="123"/>
<dbReference type="Pharos" id="Q99541">
    <property type="development level" value="Tbio"/>
</dbReference>
<dbReference type="PRO" id="PR:Q99541"/>
<dbReference type="Proteomes" id="UP000005640">
    <property type="component" value="Chromosome 9"/>
</dbReference>
<dbReference type="RNAct" id="Q99541">
    <property type="molecule type" value="protein"/>
</dbReference>
<dbReference type="Bgee" id="ENSG00000147872">
    <property type="expression patterns" value="Expressed in pericardium and 199 other cell types or tissues"/>
</dbReference>
<dbReference type="ExpressionAtlas" id="Q99541">
    <property type="expression patterns" value="baseline and differential"/>
</dbReference>
<dbReference type="GO" id="GO:0005829">
    <property type="term" value="C:cytosol"/>
    <property type="evidence" value="ECO:0000318"/>
    <property type="project" value="GO_Central"/>
</dbReference>
<dbReference type="GO" id="GO:0005783">
    <property type="term" value="C:endoplasmic reticulum"/>
    <property type="evidence" value="ECO:0000304"/>
    <property type="project" value="ProtInc"/>
</dbReference>
<dbReference type="GO" id="GO:0005576">
    <property type="term" value="C:extracellular region"/>
    <property type="evidence" value="ECO:0000304"/>
    <property type="project" value="ProtInc"/>
</dbReference>
<dbReference type="GO" id="GO:0005811">
    <property type="term" value="C:lipid droplet"/>
    <property type="evidence" value="ECO:0000314"/>
    <property type="project" value="UniProtKB"/>
</dbReference>
<dbReference type="GO" id="GO:0005634">
    <property type="term" value="C:nucleus"/>
    <property type="evidence" value="ECO:0007669"/>
    <property type="project" value="Ensembl"/>
</dbReference>
<dbReference type="GO" id="GO:0005886">
    <property type="term" value="C:plasma membrane"/>
    <property type="evidence" value="ECO:0000304"/>
    <property type="project" value="Reactome"/>
</dbReference>
<dbReference type="GO" id="GO:0042149">
    <property type="term" value="P:cellular response to glucose starvation"/>
    <property type="evidence" value="ECO:0000314"/>
    <property type="project" value="UniProtKB"/>
</dbReference>
<dbReference type="GO" id="GO:1905691">
    <property type="term" value="P:lipid droplet disassembly"/>
    <property type="evidence" value="ECO:0000314"/>
    <property type="project" value="UniProtKB"/>
</dbReference>
<dbReference type="GO" id="GO:0019915">
    <property type="term" value="P:lipid storage"/>
    <property type="evidence" value="ECO:0000314"/>
    <property type="project" value="UniProtKB"/>
</dbReference>
<dbReference type="GO" id="GO:0015909">
    <property type="term" value="P:long-chain fatty acid transport"/>
    <property type="evidence" value="ECO:0007669"/>
    <property type="project" value="Ensembl"/>
</dbReference>
<dbReference type="GO" id="GO:0010890">
    <property type="term" value="P:positive regulation of triglyceride storage"/>
    <property type="evidence" value="ECO:0000318"/>
    <property type="project" value="GO_Central"/>
</dbReference>
<dbReference type="GO" id="GO:0009410">
    <property type="term" value="P:response to xenobiotic stimulus"/>
    <property type="evidence" value="ECO:0007669"/>
    <property type="project" value="Ensembl"/>
</dbReference>
<dbReference type="FunFam" id="1.20.120.340:FF:000005">
    <property type="entry name" value="Perilipin"/>
    <property type="match status" value="1"/>
</dbReference>
<dbReference type="Gene3D" id="1.20.120.340">
    <property type="entry name" value="Flagellar protein FliS"/>
    <property type="match status" value="2"/>
</dbReference>
<dbReference type="Gene3D" id="3.30.720.170">
    <property type="entry name" value="Perilipin, alpha-beta domain"/>
    <property type="match status" value="1"/>
</dbReference>
<dbReference type="InterPro" id="IPR004279">
    <property type="entry name" value="Perilipin"/>
</dbReference>
<dbReference type="PANTHER" id="PTHR14024">
    <property type="entry name" value="PERILIPIN"/>
    <property type="match status" value="1"/>
</dbReference>
<dbReference type="PANTHER" id="PTHR14024:SF25">
    <property type="entry name" value="PERILIPIN-2"/>
    <property type="match status" value="1"/>
</dbReference>
<dbReference type="Pfam" id="PF03036">
    <property type="entry name" value="Perilipin"/>
    <property type="match status" value="1"/>
</dbReference>
<dbReference type="PIRSF" id="PIRSF036881">
    <property type="entry name" value="PAT"/>
    <property type="match status" value="1"/>
</dbReference>
<dbReference type="SUPFAM" id="SSF109775">
    <property type="entry name" value="Mannose-6-phosphate receptor binding protein 1 (Tip47), C-terminal domain"/>
    <property type="match status" value="1"/>
</dbReference>
<feature type="initiator methionine" description="Removed" evidence="10 11">
    <location>
        <position position="1"/>
    </location>
</feature>
<feature type="chain" id="PRO_0000099888" description="Perilipin-2">
    <location>
        <begin position="2"/>
        <end position="437"/>
    </location>
</feature>
<feature type="region of interest" description="Disordered" evidence="2">
    <location>
        <begin position="412"/>
        <end position="437"/>
    </location>
</feature>
<feature type="compositionally biased region" description="Basic and acidic residues" evidence="2">
    <location>
        <begin position="421"/>
        <end position="437"/>
    </location>
</feature>
<feature type="modified residue" description="N-acetylalanine" evidence="10 11">
    <location>
        <position position="2"/>
    </location>
</feature>
<feature type="modified residue" description="Phosphoserine" evidence="12">
    <location>
        <position position="215"/>
    </location>
</feature>
<feature type="modified residue" description="Phosphotyrosine" evidence="4">
    <location>
        <position position="232"/>
    </location>
</feature>
<feature type="sequence variant" id="VAR_061506" description="In dbSNP:rs35568725.">
    <original>S</original>
    <variation>P</variation>
    <location>
        <position position="251"/>
    </location>
</feature>
<feature type="mutagenesis site" description="Abolished phosphorylation at Tyr-232 by isoform 1 of CHKA (CHKalpha2)." evidence="4">
    <original>Y</original>
    <variation>F</variation>
    <location>
        <position position="232"/>
    </location>
</feature>
<feature type="sequence conflict" description="In Ref. 1; CAA65989." evidence="7" ref="1">
    <original>HI</original>
    <variation>QF</variation>
    <location>
        <begin position="305"/>
        <end position="306"/>
    </location>
</feature>
<keyword id="KW-0007">Acetylation</keyword>
<keyword id="KW-0551">Lipid droplet</keyword>
<keyword id="KW-0449">Lipoprotein</keyword>
<keyword id="KW-0472">Membrane</keyword>
<keyword id="KW-0597">Phosphoprotein</keyword>
<keyword id="KW-1267">Proteomics identification</keyword>
<keyword id="KW-1185">Reference proteome</keyword>
<keyword id="KW-0832">Ubl conjugation</keyword>